<dbReference type="EMBL" id="CP000235">
    <property type="protein sequence ID" value="ABD43388.1"/>
    <property type="molecule type" value="Genomic_DNA"/>
</dbReference>
<dbReference type="RefSeq" id="WP_011450302.1">
    <property type="nucleotide sequence ID" value="NC_007797.1"/>
</dbReference>
<dbReference type="SMR" id="Q2GLH5"/>
<dbReference type="STRING" id="212042.APH_0152"/>
<dbReference type="PaxDb" id="212042-APH_0152"/>
<dbReference type="EnsemblBacteria" id="ABD43388">
    <property type="protein sequence ID" value="ABD43388"/>
    <property type="gene ID" value="APH_0152"/>
</dbReference>
<dbReference type="GeneID" id="92747616"/>
<dbReference type="KEGG" id="aph:APH_0152"/>
<dbReference type="eggNOG" id="COG0238">
    <property type="taxonomic scope" value="Bacteria"/>
</dbReference>
<dbReference type="HOGENOM" id="CLU_148710_2_1_5"/>
<dbReference type="Proteomes" id="UP000001943">
    <property type="component" value="Chromosome"/>
</dbReference>
<dbReference type="GO" id="GO:0022627">
    <property type="term" value="C:cytosolic small ribosomal subunit"/>
    <property type="evidence" value="ECO:0007669"/>
    <property type="project" value="TreeGrafter"/>
</dbReference>
<dbReference type="GO" id="GO:0070181">
    <property type="term" value="F:small ribosomal subunit rRNA binding"/>
    <property type="evidence" value="ECO:0007669"/>
    <property type="project" value="TreeGrafter"/>
</dbReference>
<dbReference type="GO" id="GO:0003735">
    <property type="term" value="F:structural constituent of ribosome"/>
    <property type="evidence" value="ECO:0007669"/>
    <property type="project" value="InterPro"/>
</dbReference>
<dbReference type="GO" id="GO:0006412">
    <property type="term" value="P:translation"/>
    <property type="evidence" value="ECO:0007669"/>
    <property type="project" value="UniProtKB-UniRule"/>
</dbReference>
<dbReference type="Gene3D" id="4.10.640.10">
    <property type="entry name" value="Ribosomal protein S18"/>
    <property type="match status" value="1"/>
</dbReference>
<dbReference type="HAMAP" id="MF_00270">
    <property type="entry name" value="Ribosomal_bS18"/>
    <property type="match status" value="1"/>
</dbReference>
<dbReference type="InterPro" id="IPR001648">
    <property type="entry name" value="Ribosomal_bS18"/>
</dbReference>
<dbReference type="InterPro" id="IPR036870">
    <property type="entry name" value="Ribosomal_bS18_sf"/>
</dbReference>
<dbReference type="NCBIfam" id="TIGR00165">
    <property type="entry name" value="S18"/>
    <property type="match status" value="1"/>
</dbReference>
<dbReference type="PANTHER" id="PTHR13479">
    <property type="entry name" value="30S RIBOSOMAL PROTEIN S18"/>
    <property type="match status" value="1"/>
</dbReference>
<dbReference type="PANTHER" id="PTHR13479:SF40">
    <property type="entry name" value="SMALL RIBOSOMAL SUBUNIT PROTEIN BS18M"/>
    <property type="match status" value="1"/>
</dbReference>
<dbReference type="Pfam" id="PF01084">
    <property type="entry name" value="Ribosomal_S18"/>
    <property type="match status" value="1"/>
</dbReference>
<dbReference type="PRINTS" id="PR00974">
    <property type="entry name" value="RIBOSOMALS18"/>
</dbReference>
<dbReference type="SUPFAM" id="SSF46911">
    <property type="entry name" value="Ribosomal protein S18"/>
    <property type="match status" value="1"/>
</dbReference>
<keyword id="KW-0687">Ribonucleoprotein</keyword>
<keyword id="KW-0689">Ribosomal protein</keyword>
<keyword id="KW-0694">RNA-binding</keyword>
<keyword id="KW-0699">rRNA-binding</keyword>
<sequence>MSHGGKRRSGDGGSEGSSYSPLVYLKRPYFRKSRSCPLAQCPDEDIDYKNKVLLSKFVSEYGRILPSRITSVSARKQKLLARAIKRARYLALLPYC</sequence>
<feature type="chain" id="PRO_0000345439" description="Small ribosomal subunit protein bS18">
    <location>
        <begin position="1"/>
        <end position="96"/>
    </location>
</feature>
<feature type="region of interest" description="Disordered" evidence="2">
    <location>
        <begin position="1"/>
        <end position="20"/>
    </location>
</feature>
<organism>
    <name type="scientific">Anaplasma phagocytophilum (strain HZ)</name>
    <dbReference type="NCBI Taxonomy" id="212042"/>
    <lineage>
        <taxon>Bacteria</taxon>
        <taxon>Pseudomonadati</taxon>
        <taxon>Pseudomonadota</taxon>
        <taxon>Alphaproteobacteria</taxon>
        <taxon>Rickettsiales</taxon>
        <taxon>Anaplasmataceae</taxon>
        <taxon>Anaplasma</taxon>
        <taxon>phagocytophilum group</taxon>
    </lineage>
</organism>
<reference key="1">
    <citation type="journal article" date="2006" name="PLoS Genet.">
        <title>Comparative genomics of emerging human ehrlichiosis agents.</title>
        <authorList>
            <person name="Dunning Hotopp J.C."/>
            <person name="Lin M."/>
            <person name="Madupu R."/>
            <person name="Crabtree J."/>
            <person name="Angiuoli S.V."/>
            <person name="Eisen J.A."/>
            <person name="Seshadri R."/>
            <person name="Ren Q."/>
            <person name="Wu M."/>
            <person name="Utterback T.R."/>
            <person name="Smith S."/>
            <person name="Lewis M."/>
            <person name="Khouri H."/>
            <person name="Zhang C."/>
            <person name="Niu H."/>
            <person name="Lin Q."/>
            <person name="Ohashi N."/>
            <person name="Zhi N."/>
            <person name="Nelson W.C."/>
            <person name="Brinkac L.M."/>
            <person name="Dodson R.J."/>
            <person name="Rosovitz M.J."/>
            <person name="Sundaram J.P."/>
            <person name="Daugherty S.C."/>
            <person name="Davidsen T."/>
            <person name="Durkin A.S."/>
            <person name="Gwinn M.L."/>
            <person name="Haft D.H."/>
            <person name="Selengut J.D."/>
            <person name="Sullivan S.A."/>
            <person name="Zafar N."/>
            <person name="Zhou L."/>
            <person name="Benahmed F."/>
            <person name="Forberger H."/>
            <person name="Halpin R."/>
            <person name="Mulligan S."/>
            <person name="Robinson J."/>
            <person name="White O."/>
            <person name="Rikihisa Y."/>
            <person name="Tettelin H."/>
        </authorList>
    </citation>
    <scope>NUCLEOTIDE SEQUENCE [LARGE SCALE GENOMIC DNA]</scope>
    <source>
        <strain>HZ</strain>
    </source>
</reference>
<proteinExistence type="inferred from homology"/>
<name>RS18_ANAPZ</name>
<evidence type="ECO:0000255" key="1">
    <source>
        <dbReference type="HAMAP-Rule" id="MF_00270"/>
    </source>
</evidence>
<evidence type="ECO:0000256" key="2">
    <source>
        <dbReference type="SAM" id="MobiDB-lite"/>
    </source>
</evidence>
<evidence type="ECO:0000305" key="3"/>
<accession>Q2GLH5</accession>
<gene>
    <name evidence="1" type="primary">rpsR</name>
    <name type="ordered locus">APH_0152</name>
</gene>
<comment type="function">
    <text evidence="1">Binds as a heterodimer with protein bS6 to the central domain of the 16S rRNA, where it helps stabilize the platform of the 30S subunit.</text>
</comment>
<comment type="subunit">
    <text evidence="1">Part of the 30S ribosomal subunit. Forms a tight heterodimer with protein bS6.</text>
</comment>
<comment type="similarity">
    <text evidence="1">Belongs to the bacterial ribosomal protein bS18 family.</text>
</comment>
<protein>
    <recommendedName>
        <fullName evidence="1">Small ribosomal subunit protein bS18</fullName>
    </recommendedName>
    <alternativeName>
        <fullName evidence="3">30S ribosomal protein S18</fullName>
    </alternativeName>
</protein>